<protein>
    <recommendedName>
        <fullName evidence="1">Chaperonin GroEL</fullName>
        <ecNumber evidence="1">5.6.1.7</ecNumber>
    </recommendedName>
    <alternativeName>
        <fullName evidence="1">60 kDa chaperonin</fullName>
    </alternativeName>
    <alternativeName>
        <fullName evidence="1">Chaperonin-60</fullName>
        <shortName evidence="1">Cpn60</shortName>
    </alternativeName>
</protein>
<keyword id="KW-0067">ATP-binding</keyword>
<keyword id="KW-0143">Chaperone</keyword>
<keyword id="KW-0963">Cytoplasm</keyword>
<keyword id="KW-0413">Isomerase</keyword>
<keyword id="KW-0547">Nucleotide-binding</keyword>
<keyword id="KW-0346">Stress response</keyword>
<proteinExistence type="inferred from homology"/>
<feature type="chain" id="PRO_1000130061" description="Chaperonin GroEL">
    <location>
        <begin position="1"/>
        <end position="541"/>
    </location>
</feature>
<feature type="binding site" evidence="1">
    <location>
        <begin position="29"/>
        <end position="32"/>
    </location>
    <ligand>
        <name>ATP</name>
        <dbReference type="ChEBI" id="CHEBI:30616"/>
    </ligand>
</feature>
<feature type="binding site" evidence="1">
    <location>
        <begin position="86"/>
        <end position="90"/>
    </location>
    <ligand>
        <name>ATP</name>
        <dbReference type="ChEBI" id="CHEBI:30616"/>
    </ligand>
</feature>
<feature type="binding site" evidence="1">
    <location>
        <position position="413"/>
    </location>
    <ligand>
        <name>ATP</name>
        <dbReference type="ChEBI" id="CHEBI:30616"/>
    </ligand>
</feature>
<feature type="binding site" evidence="1">
    <location>
        <begin position="476"/>
        <end position="478"/>
    </location>
    <ligand>
        <name>ATP</name>
        <dbReference type="ChEBI" id="CHEBI:30616"/>
    </ligand>
</feature>
<feature type="binding site" evidence="1">
    <location>
        <position position="492"/>
    </location>
    <ligand>
        <name>ATP</name>
        <dbReference type="ChEBI" id="CHEBI:30616"/>
    </ligand>
</feature>
<accession>B4U081</accession>
<organism>
    <name type="scientific">Streptococcus equi subsp. zooepidemicus (strain MGCS10565)</name>
    <dbReference type="NCBI Taxonomy" id="552526"/>
    <lineage>
        <taxon>Bacteria</taxon>
        <taxon>Bacillati</taxon>
        <taxon>Bacillota</taxon>
        <taxon>Bacilli</taxon>
        <taxon>Lactobacillales</taxon>
        <taxon>Streptococcaceae</taxon>
        <taxon>Streptococcus</taxon>
    </lineage>
</organism>
<dbReference type="EC" id="5.6.1.7" evidence="1"/>
<dbReference type="EMBL" id="CP001129">
    <property type="protein sequence ID" value="ACG61524.1"/>
    <property type="molecule type" value="Genomic_DNA"/>
</dbReference>
<dbReference type="RefSeq" id="WP_012514807.1">
    <property type="nucleotide sequence ID" value="NC_011134.1"/>
</dbReference>
<dbReference type="SMR" id="B4U081"/>
<dbReference type="KEGG" id="sez:Sez_0146"/>
<dbReference type="HOGENOM" id="CLU_016503_3_0_9"/>
<dbReference type="Proteomes" id="UP000001873">
    <property type="component" value="Chromosome"/>
</dbReference>
<dbReference type="GO" id="GO:0005737">
    <property type="term" value="C:cytoplasm"/>
    <property type="evidence" value="ECO:0007669"/>
    <property type="project" value="UniProtKB-SubCell"/>
</dbReference>
<dbReference type="GO" id="GO:0005524">
    <property type="term" value="F:ATP binding"/>
    <property type="evidence" value="ECO:0007669"/>
    <property type="project" value="UniProtKB-UniRule"/>
</dbReference>
<dbReference type="GO" id="GO:0140662">
    <property type="term" value="F:ATP-dependent protein folding chaperone"/>
    <property type="evidence" value="ECO:0007669"/>
    <property type="project" value="InterPro"/>
</dbReference>
<dbReference type="GO" id="GO:0016853">
    <property type="term" value="F:isomerase activity"/>
    <property type="evidence" value="ECO:0007669"/>
    <property type="project" value="UniProtKB-KW"/>
</dbReference>
<dbReference type="GO" id="GO:0051082">
    <property type="term" value="F:unfolded protein binding"/>
    <property type="evidence" value="ECO:0007669"/>
    <property type="project" value="UniProtKB-UniRule"/>
</dbReference>
<dbReference type="GO" id="GO:0042026">
    <property type="term" value="P:protein refolding"/>
    <property type="evidence" value="ECO:0007669"/>
    <property type="project" value="UniProtKB-UniRule"/>
</dbReference>
<dbReference type="CDD" id="cd03344">
    <property type="entry name" value="GroEL"/>
    <property type="match status" value="1"/>
</dbReference>
<dbReference type="FunFam" id="1.10.560.10:FF:000001">
    <property type="entry name" value="60 kDa chaperonin"/>
    <property type="match status" value="1"/>
</dbReference>
<dbReference type="FunFam" id="3.50.7.10:FF:000001">
    <property type="entry name" value="60 kDa chaperonin"/>
    <property type="match status" value="1"/>
</dbReference>
<dbReference type="Gene3D" id="3.50.7.10">
    <property type="entry name" value="GroEL"/>
    <property type="match status" value="1"/>
</dbReference>
<dbReference type="Gene3D" id="1.10.560.10">
    <property type="entry name" value="GroEL-like equatorial domain"/>
    <property type="match status" value="1"/>
</dbReference>
<dbReference type="Gene3D" id="3.30.260.10">
    <property type="entry name" value="TCP-1-like chaperonin intermediate domain"/>
    <property type="match status" value="1"/>
</dbReference>
<dbReference type="HAMAP" id="MF_00600">
    <property type="entry name" value="CH60"/>
    <property type="match status" value="1"/>
</dbReference>
<dbReference type="InterPro" id="IPR018370">
    <property type="entry name" value="Chaperonin_Cpn60_CS"/>
</dbReference>
<dbReference type="InterPro" id="IPR001844">
    <property type="entry name" value="Cpn60/GroEL"/>
</dbReference>
<dbReference type="InterPro" id="IPR002423">
    <property type="entry name" value="Cpn60/GroEL/TCP-1"/>
</dbReference>
<dbReference type="InterPro" id="IPR027409">
    <property type="entry name" value="GroEL-like_apical_dom_sf"/>
</dbReference>
<dbReference type="InterPro" id="IPR027413">
    <property type="entry name" value="GROEL-like_equatorial_sf"/>
</dbReference>
<dbReference type="InterPro" id="IPR027410">
    <property type="entry name" value="TCP-1-like_intermed_sf"/>
</dbReference>
<dbReference type="NCBIfam" id="TIGR02348">
    <property type="entry name" value="GroEL"/>
    <property type="match status" value="1"/>
</dbReference>
<dbReference type="NCBIfam" id="NF000592">
    <property type="entry name" value="PRK00013.1"/>
    <property type="match status" value="1"/>
</dbReference>
<dbReference type="NCBIfam" id="NF009487">
    <property type="entry name" value="PRK12849.1"/>
    <property type="match status" value="1"/>
</dbReference>
<dbReference type="NCBIfam" id="NF009488">
    <property type="entry name" value="PRK12850.1"/>
    <property type="match status" value="1"/>
</dbReference>
<dbReference type="NCBIfam" id="NF009489">
    <property type="entry name" value="PRK12851.1"/>
    <property type="match status" value="1"/>
</dbReference>
<dbReference type="PANTHER" id="PTHR45633">
    <property type="entry name" value="60 KDA HEAT SHOCK PROTEIN, MITOCHONDRIAL"/>
    <property type="match status" value="1"/>
</dbReference>
<dbReference type="Pfam" id="PF00118">
    <property type="entry name" value="Cpn60_TCP1"/>
    <property type="match status" value="1"/>
</dbReference>
<dbReference type="PRINTS" id="PR00298">
    <property type="entry name" value="CHAPERONIN60"/>
</dbReference>
<dbReference type="SUPFAM" id="SSF52029">
    <property type="entry name" value="GroEL apical domain-like"/>
    <property type="match status" value="1"/>
</dbReference>
<dbReference type="SUPFAM" id="SSF48592">
    <property type="entry name" value="GroEL equatorial domain-like"/>
    <property type="match status" value="1"/>
</dbReference>
<dbReference type="SUPFAM" id="SSF54849">
    <property type="entry name" value="GroEL-intermediate domain like"/>
    <property type="match status" value="1"/>
</dbReference>
<dbReference type="PROSITE" id="PS00296">
    <property type="entry name" value="CHAPERONINS_CPN60"/>
    <property type="match status" value="1"/>
</dbReference>
<reference key="1">
    <citation type="journal article" date="2008" name="PLoS ONE">
        <title>Genome sequence of a lancefield group C Streptococcus zooepidemicus strain causing epidemic nephritis: new information about an old disease.</title>
        <authorList>
            <person name="Beres S.B."/>
            <person name="Sesso R."/>
            <person name="Pinto S.W.L."/>
            <person name="Hoe N.P."/>
            <person name="Porcella S.F."/>
            <person name="Deleo F.R."/>
            <person name="Musser J.M."/>
        </authorList>
    </citation>
    <scope>NUCLEOTIDE SEQUENCE [LARGE SCALE GENOMIC DNA]</scope>
    <source>
        <strain>MGCS10565</strain>
    </source>
</reference>
<gene>
    <name evidence="1" type="primary">groEL</name>
    <name evidence="1" type="synonym">groL</name>
    <name type="ordered locus">Sez_0146</name>
</gene>
<name>CH60_STREM</name>
<comment type="function">
    <text evidence="1">Together with its co-chaperonin GroES, plays an essential role in assisting protein folding. The GroEL-GroES system forms a nano-cage that allows encapsulation of the non-native substrate proteins and provides a physical environment optimized to promote and accelerate protein folding.</text>
</comment>
<comment type="catalytic activity">
    <reaction evidence="1">
        <text>ATP + H2O + a folded polypeptide = ADP + phosphate + an unfolded polypeptide.</text>
        <dbReference type="EC" id="5.6.1.7"/>
    </reaction>
</comment>
<comment type="subunit">
    <text evidence="1">Forms a cylinder of 14 subunits composed of two heptameric rings stacked back-to-back. Interacts with the co-chaperonin GroES.</text>
</comment>
<comment type="subcellular location">
    <subcellularLocation>
        <location evidence="1">Cytoplasm</location>
    </subcellularLocation>
</comment>
<comment type="similarity">
    <text evidence="1">Belongs to the chaperonin (HSP60) family.</text>
</comment>
<sequence length="541" mass="56916">MAKDIKFSADARESMVRGVDILADTVKVTLGPKGRNVVLEKAFGSPLITNDGVTIAKEIELEDHFENMGAKLVSEVASKTNDIAGDGTTTATVLTQAIVREGLKNVTAGANPIGIRRGIEAATTTAVEALKAVAQPVSGKEAIAQVASVSSRSEKVGDYISEAMERVGNDGVITIEESRGMETELEVVEGMQFDRGYLSQYMVTDNEKMVADLENPFILITDKKISNIQDILPLLEEVLKTSRPLLIIADDVDGEALPTLVLNKIRGTFNVVAVKAPGFGDRRKAMLEDIAVLTGGTVITEDLGLELKDATMAALGQAAKVTVDKDNTVIVEGAGSSEAISNRVSLIKSQLETTTSEFDREKLQERLAKLAGGVAVIKVGAATETELKEMKLRIEDALNATRAAVEEGIVAGGGTALINVMDKVAALELDGDAATGRNIVLRALEEPVRQIAYNAGYEGSVIIDKLKNSAAGVGFNAATGEWVDMIATGIIDPVKVTRSALQNAASVAGLILTTEAVVATKPEPAAPAMPQGMDPGMMGGF</sequence>
<evidence type="ECO:0000255" key="1">
    <source>
        <dbReference type="HAMAP-Rule" id="MF_00600"/>
    </source>
</evidence>